<protein>
    <recommendedName>
        <fullName evidence="1">Phosphate acyltransferase</fullName>
        <ecNumber evidence="1">2.3.1.274</ecNumber>
    </recommendedName>
    <alternativeName>
        <fullName evidence="1">Acyl-ACP phosphotransacylase</fullName>
    </alternativeName>
    <alternativeName>
        <fullName evidence="1">Acyl-[acyl-carrier-protein]--phosphate acyltransferase</fullName>
    </alternativeName>
    <alternativeName>
        <fullName evidence="1">Phosphate-acyl-ACP acyltransferase</fullName>
    </alternativeName>
</protein>
<name>PLSX_CHESB</name>
<proteinExistence type="inferred from homology"/>
<keyword id="KW-0963">Cytoplasm</keyword>
<keyword id="KW-0444">Lipid biosynthesis</keyword>
<keyword id="KW-0443">Lipid metabolism</keyword>
<keyword id="KW-0594">Phospholipid biosynthesis</keyword>
<keyword id="KW-1208">Phospholipid metabolism</keyword>
<keyword id="KW-0808">Transferase</keyword>
<organism>
    <name type="scientific">Chelativorans sp. (strain BNC1)</name>
    <dbReference type="NCBI Taxonomy" id="266779"/>
    <lineage>
        <taxon>Bacteria</taxon>
        <taxon>Pseudomonadati</taxon>
        <taxon>Pseudomonadota</taxon>
        <taxon>Alphaproteobacteria</taxon>
        <taxon>Hyphomicrobiales</taxon>
        <taxon>Phyllobacteriaceae</taxon>
        <taxon>Chelativorans</taxon>
    </lineage>
</organism>
<comment type="function">
    <text evidence="1">Catalyzes the reversible formation of acyl-phosphate (acyl-PO(4)) from acyl-[acyl-carrier-protein] (acyl-ACP). This enzyme utilizes acyl-ACP as fatty acyl donor, but not acyl-CoA.</text>
</comment>
<comment type="catalytic activity">
    <reaction evidence="1">
        <text>a fatty acyl-[ACP] + phosphate = an acyl phosphate + holo-[ACP]</text>
        <dbReference type="Rhea" id="RHEA:42292"/>
        <dbReference type="Rhea" id="RHEA-COMP:9685"/>
        <dbReference type="Rhea" id="RHEA-COMP:14125"/>
        <dbReference type="ChEBI" id="CHEBI:43474"/>
        <dbReference type="ChEBI" id="CHEBI:59918"/>
        <dbReference type="ChEBI" id="CHEBI:64479"/>
        <dbReference type="ChEBI" id="CHEBI:138651"/>
        <dbReference type="EC" id="2.3.1.274"/>
    </reaction>
</comment>
<comment type="pathway">
    <text evidence="1">Lipid metabolism; phospholipid metabolism.</text>
</comment>
<comment type="subunit">
    <text evidence="1">Homodimer. Probably interacts with PlsY.</text>
</comment>
<comment type="subcellular location">
    <subcellularLocation>
        <location evidence="1">Cytoplasm</location>
    </subcellularLocation>
    <text evidence="1">Associated with the membrane possibly through PlsY.</text>
</comment>
<comment type="similarity">
    <text evidence="1">Belongs to the PlsX family.</text>
</comment>
<reference key="1">
    <citation type="submission" date="2006-06" db="EMBL/GenBank/DDBJ databases">
        <title>Complete sequence of chromosome of Mesorhizobium sp. BNC1.</title>
        <authorList>
            <consortium name="US DOE Joint Genome Institute"/>
            <person name="Copeland A."/>
            <person name="Lucas S."/>
            <person name="Lapidus A."/>
            <person name="Barry K."/>
            <person name="Detter J.C."/>
            <person name="Glavina del Rio T."/>
            <person name="Hammon N."/>
            <person name="Israni S."/>
            <person name="Dalin E."/>
            <person name="Tice H."/>
            <person name="Pitluck S."/>
            <person name="Chertkov O."/>
            <person name="Brettin T."/>
            <person name="Bruce D."/>
            <person name="Han C."/>
            <person name="Tapia R."/>
            <person name="Gilna P."/>
            <person name="Schmutz J."/>
            <person name="Larimer F."/>
            <person name="Land M."/>
            <person name="Hauser L."/>
            <person name="Kyrpides N."/>
            <person name="Mikhailova N."/>
            <person name="Richardson P."/>
        </authorList>
    </citation>
    <scope>NUCLEOTIDE SEQUENCE [LARGE SCALE GENOMIC DNA]</scope>
    <source>
        <strain>BNC1</strain>
    </source>
</reference>
<accession>Q11J84</accession>
<gene>
    <name evidence="1" type="primary">plsX</name>
    <name type="ordered locus">Meso_1145</name>
</gene>
<dbReference type="EC" id="2.3.1.274" evidence="1"/>
<dbReference type="EMBL" id="CP000390">
    <property type="protein sequence ID" value="ABG62541.1"/>
    <property type="molecule type" value="Genomic_DNA"/>
</dbReference>
<dbReference type="SMR" id="Q11J84"/>
<dbReference type="STRING" id="266779.Meso_1145"/>
<dbReference type="KEGG" id="mes:Meso_1145"/>
<dbReference type="eggNOG" id="COG0416">
    <property type="taxonomic scope" value="Bacteria"/>
</dbReference>
<dbReference type="HOGENOM" id="CLU_039379_1_0_5"/>
<dbReference type="OrthoDB" id="9806408at2"/>
<dbReference type="UniPathway" id="UPA00085"/>
<dbReference type="GO" id="GO:0005737">
    <property type="term" value="C:cytoplasm"/>
    <property type="evidence" value="ECO:0007669"/>
    <property type="project" value="UniProtKB-SubCell"/>
</dbReference>
<dbReference type="GO" id="GO:0043811">
    <property type="term" value="F:phosphate:acyl-[acyl carrier protein] acyltransferase activity"/>
    <property type="evidence" value="ECO:0007669"/>
    <property type="project" value="UniProtKB-UniRule"/>
</dbReference>
<dbReference type="GO" id="GO:0006633">
    <property type="term" value="P:fatty acid biosynthetic process"/>
    <property type="evidence" value="ECO:0007669"/>
    <property type="project" value="UniProtKB-UniRule"/>
</dbReference>
<dbReference type="GO" id="GO:0008654">
    <property type="term" value="P:phospholipid biosynthetic process"/>
    <property type="evidence" value="ECO:0007669"/>
    <property type="project" value="UniProtKB-KW"/>
</dbReference>
<dbReference type="Gene3D" id="3.40.718.10">
    <property type="entry name" value="Isopropylmalate Dehydrogenase"/>
    <property type="match status" value="1"/>
</dbReference>
<dbReference type="HAMAP" id="MF_00019">
    <property type="entry name" value="PlsX"/>
    <property type="match status" value="1"/>
</dbReference>
<dbReference type="InterPro" id="IPR003664">
    <property type="entry name" value="FA_synthesis"/>
</dbReference>
<dbReference type="InterPro" id="IPR012281">
    <property type="entry name" value="Phospholipid_synth_PlsX-like"/>
</dbReference>
<dbReference type="NCBIfam" id="TIGR00182">
    <property type="entry name" value="plsX"/>
    <property type="match status" value="1"/>
</dbReference>
<dbReference type="PANTHER" id="PTHR30100">
    <property type="entry name" value="FATTY ACID/PHOSPHOLIPID SYNTHESIS PROTEIN PLSX"/>
    <property type="match status" value="1"/>
</dbReference>
<dbReference type="PANTHER" id="PTHR30100:SF1">
    <property type="entry name" value="PHOSPHATE ACYLTRANSFERASE"/>
    <property type="match status" value="1"/>
</dbReference>
<dbReference type="Pfam" id="PF02504">
    <property type="entry name" value="FA_synthesis"/>
    <property type="match status" value="1"/>
</dbReference>
<dbReference type="PIRSF" id="PIRSF002465">
    <property type="entry name" value="Phsphlp_syn_PlsX"/>
    <property type="match status" value="1"/>
</dbReference>
<dbReference type="SUPFAM" id="SSF53659">
    <property type="entry name" value="Isocitrate/Isopropylmalate dehydrogenase-like"/>
    <property type="match status" value="1"/>
</dbReference>
<evidence type="ECO:0000255" key="1">
    <source>
        <dbReference type="HAMAP-Rule" id="MF_00019"/>
    </source>
</evidence>
<feature type="chain" id="PRO_1000001786" description="Phosphate acyltransferase">
    <location>
        <begin position="1"/>
        <end position="350"/>
    </location>
</feature>
<sequence length="350" mass="37833">MIRISIDAMGGDHGPEVTLPSLLRVAERRPDARFLIFGREDEARPVLDRLPALADVSDFTHCEVAVRMDDKPSQALRNGRWKSSMWKAIEAVKDGEADVCISAGNTGALMAMSKFCLRTMADIERPAIAAIWPTIRGESIVLDVGATIGADAQQLVDFAILGAAMANALFDIERPTVGLLNVGVEEIKGQEEVKEAGRMLREAALETMQYHGFVEGDDIGKGTVDVVVTEGFSGNIALKTAEGTARQIAEYLRAAMSRTLMARIGYIFARDAFQRLREKMDVRRTNGGVFLGLKGIVVKSHGAADEEGFAAAVELGYEMVKSGLLDKTRATLDLYHARRPVAPAGAVSNA</sequence>